<sequence length="774" mass="83694">MTMAAKTDREALQAALPPLSGSLSIPGLSAPVRVQRDGWGIPHIKASGEADAYRALGFVHAQDRLFQMELTRRKALGRAAEWLGAEAAEADILVRRLGMEKVCRRDFEALGAEAKDMLRAYVAGVNAFLASGAPLPIEYGLLGAEPEPWEPWHSIAVMRRLGLLMGSVWFKLWRMLALPVVGAANALKLRYDDGGQDLLCIPPGVEAERLEADLAALRPAVDALLKAMGGDASDAAGGGSNNWAVAPGRTATGRPILAGDPHRVFEIPGMYAQHHLACDRFDMIGLTVPGVPGFPHFAHNGKVAYCVTHAFMDIHDLYLEQFAEDGRTARFGNEFEPVAWRRDRIAVRGGADREFDIVETRHGPVIAGDPLEGAALTLRSVQFAETDLSFDCLTRMPGASTVAQLYDATRGWGLIDHNLVAGDVAGSIGHLVRARVPSRPRENGWLPVPGWSGEHEWRGWIPHEAMPRVIDPPGGLIVTANNRVVADDHPDYLCTDCHPPYRAERIMERLVASPAFAVDDAAAIHADTLSPHVGLLRARLEALGIQGSLPAEELRQTLIAWDGRMDAGSQAASAYNAFRRALTRLVTARSGLEQAIAHPFAAVPPGVSPQGQVWWAVPTLLRNDDAGMLKGWSWDEALSEALSVATQNLTGRGWGEEHRPRFTHPLSAQFPAWAALLNPVSRPIGGDGDTVLANGLVPSAGPEATYGALSRYVFDVGNWDNSRWVVFHGASGHPASPHYADQNAPWSDCAMVPMLYSWDRIAAEAVTSQELVPA</sequence>
<accession>P15558</accession>
<keyword id="KW-0046">Antibiotic resistance</keyword>
<keyword id="KW-0903">Direct protein sequencing</keyword>
<keyword id="KW-0378">Hydrolase</keyword>
<keyword id="KW-0865">Zymogen</keyword>
<comment type="catalytic activity">
    <reaction>
        <text>a penicillin + H2O = 6-aminopenicillanate + a carboxylate</text>
        <dbReference type="Rhea" id="RHEA:18693"/>
        <dbReference type="ChEBI" id="CHEBI:15377"/>
        <dbReference type="ChEBI" id="CHEBI:29067"/>
        <dbReference type="ChEBI" id="CHEBI:51356"/>
        <dbReference type="ChEBI" id="CHEBI:57869"/>
        <dbReference type="EC" id="3.5.1.11"/>
    </reaction>
</comment>
<comment type="subunit">
    <text evidence="2">Heterodimer of a small subunit and a large subunit processed from the same precursor.</text>
</comment>
<comment type="similarity">
    <text evidence="3">Belongs to the peptidase S45 family.</text>
</comment>
<dbReference type="EC" id="3.5.1.11"/>
<dbReference type="EMBL" id="M18278">
    <property type="protein sequence ID" value="AAA25690.1"/>
    <property type="molecule type" value="Genomic_DNA"/>
</dbReference>
<dbReference type="PIR" id="A28392">
    <property type="entry name" value="A28392"/>
</dbReference>
<dbReference type="SMR" id="P15558"/>
<dbReference type="MEROPS" id="S45.003"/>
<dbReference type="BRENDA" id="3.5.1.93">
    <property type="organism ID" value="5085"/>
</dbReference>
<dbReference type="GO" id="GO:0008953">
    <property type="term" value="F:penicillin amidase activity"/>
    <property type="evidence" value="ECO:0007669"/>
    <property type="project" value="UniProtKB-EC"/>
</dbReference>
<dbReference type="GO" id="GO:0017000">
    <property type="term" value="P:antibiotic biosynthetic process"/>
    <property type="evidence" value="ECO:0007669"/>
    <property type="project" value="InterPro"/>
</dbReference>
<dbReference type="GO" id="GO:0046677">
    <property type="term" value="P:response to antibiotic"/>
    <property type="evidence" value="ECO:0007669"/>
    <property type="project" value="UniProtKB-KW"/>
</dbReference>
<dbReference type="CDD" id="cd03747">
    <property type="entry name" value="Ntn_PGA_like"/>
    <property type="match status" value="1"/>
</dbReference>
<dbReference type="Gene3D" id="1.10.1400.10">
    <property type="match status" value="1"/>
</dbReference>
<dbReference type="Gene3D" id="2.30.120.10">
    <property type="match status" value="1"/>
</dbReference>
<dbReference type="Gene3D" id="3.60.20.10">
    <property type="entry name" value="Glutamine Phosphoribosylpyrophosphate, subunit 1, domain 1"/>
    <property type="match status" value="1"/>
</dbReference>
<dbReference type="Gene3D" id="1.10.10.2580">
    <property type="entry name" value="Penicillin Acylase III, Chain A, Domain 2"/>
    <property type="match status" value="1"/>
</dbReference>
<dbReference type="Gene3D" id="1.10.439.10">
    <property type="entry name" value="Penicillin Amidohydrolase, domain 1"/>
    <property type="match status" value="1"/>
</dbReference>
<dbReference type="InterPro" id="IPR029055">
    <property type="entry name" value="Ntn_hydrolases_N"/>
</dbReference>
<dbReference type="InterPro" id="IPR014395">
    <property type="entry name" value="Pen/GL7ACA/AHL_acylase"/>
</dbReference>
<dbReference type="InterPro" id="IPR043147">
    <property type="entry name" value="Penicillin_amidase_A-knob"/>
</dbReference>
<dbReference type="InterPro" id="IPR023343">
    <property type="entry name" value="Penicillin_amidase_dom1"/>
</dbReference>
<dbReference type="InterPro" id="IPR043146">
    <property type="entry name" value="Penicillin_amidase_N_B-knob"/>
</dbReference>
<dbReference type="InterPro" id="IPR002692">
    <property type="entry name" value="S45"/>
</dbReference>
<dbReference type="PANTHER" id="PTHR34218:SF4">
    <property type="entry name" value="ACYL-HOMOSERINE LACTONE ACYLASE QUIP"/>
    <property type="match status" value="1"/>
</dbReference>
<dbReference type="PANTHER" id="PTHR34218">
    <property type="entry name" value="PEPTIDASE S45 PENICILLIN AMIDASE"/>
    <property type="match status" value="1"/>
</dbReference>
<dbReference type="Pfam" id="PF01804">
    <property type="entry name" value="Penicil_amidase"/>
    <property type="match status" value="1"/>
</dbReference>
<dbReference type="PIRSF" id="PIRSF001227">
    <property type="entry name" value="Pen_acylase"/>
    <property type="match status" value="1"/>
</dbReference>
<dbReference type="SUPFAM" id="SSF56235">
    <property type="entry name" value="N-terminal nucleophile aminohydrolases (Ntn hydrolases)"/>
    <property type="match status" value="1"/>
</dbReference>
<feature type="initiator methionine" description="Removed" evidence="2">
    <location>
        <position position="1"/>
    </location>
</feature>
<feature type="chain" id="PRO_0000253349" description="Penicillin acylase 2 proenzyme">
    <location>
        <begin position="2"/>
        <end position="774"/>
    </location>
</feature>
<feature type="chain" id="PRO_0000021991" description="Penicillin acylase 2 small subunit">
    <location>
        <begin position="2"/>
        <end position="239" status="uncertain"/>
    </location>
</feature>
<feature type="chain" id="PRO_0000021992" description="Penicillin acylase 2 large subunit">
    <location>
        <begin position="240"/>
        <end position="774"/>
    </location>
</feature>
<feature type="active site" description="Nucleophile" evidence="1">
    <location>
        <position position="240"/>
    </location>
</feature>
<name>PAC2_PSES3</name>
<protein>
    <recommendedName>
        <fullName>Penicillin acylase 2 proenzyme</fullName>
        <ecNumber>3.5.1.11</ecNumber>
    </recommendedName>
    <alternativeName>
        <fullName>Cephalosporin acylase II</fullName>
    </alternativeName>
    <alternativeName>
        <fullName>Penicillin acylase II</fullName>
    </alternativeName>
    <alternativeName>
        <fullName>Penicillin amidase II</fullName>
    </alternativeName>
    <component>
        <recommendedName>
            <fullName>Penicillin acylase 2 small subunit</fullName>
        </recommendedName>
        <alternativeName>
            <fullName>Penicillin acylase II small subunit</fullName>
        </alternativeName>
    </component>
    <component>
        <recommendedName>
            <fullName>Penicillin acylase 2 large subunit</fullName>
        </recommendedName>
        <alternativeName>
            <fullName>Penicillin acylase II large subunit</fullName>
        </alternativeName>
    </component>
</protein>
<evidence type="ECO:0000250" key="1"/>
<evidence type="ECO:0000269" key="2">
    <source>
    </source>
</evidence>
<evidence type="ECO:0000305" key="3"/>
<gene>
    <name type="primary">acyII</name>
</gene>
<proteinExistence type="evidence at protein level"/>
<reference key="1">
    <citation type="journal article" date="1987" name="J. Bacteriol.">
        <title>Nucleotide sequences of the genes for two distinct cephalosporin acylases from a Pseudomonas strain.</title>
        <authorList>
            <person name="Matsuda A."/>
            <person name="Toma K."/>
            <person name="Komatsu K."/>
        </authorList>
    </citation>
    <scope>NUCLEOTIDE SEQUENCE [GENOMIC DNA]</scope>
    <scope>PROTEIN SEQUENCE OF 2-38 AND 240-276</scope>
    <scope>SUBUNIT</scope>
    <source>
        <strain>SE83</strain>
    </source>
</reference>
<organism>
    <name type="scientific">Pseudomonas sp. (strain SE83)</name>
    <dbReference type="NCBI Taxonomy" id="309"/>
    <lineage>
        <taxon>Bacteria</taxon>
        <taxon>Pseudomonadati</taxon>
        <taxon>Pseudomonadota</taxon>
    </lineage>
</organism>